<gene>
    <name evidence="1" type="primary">ung</name>
    <name type="ordered locus">HH_1249</name>
</gene>
<reference key="1">
    <citation type="journal article" date="2003" name="Proc. Natl. Acad. Sci. U.S.A.">
        <title>The complete genome sequence of the carcinogenic bacterium Helicobacter hepaticus.</title>
        <authorList>
            <person name="Suerbaum S."/>
            <person name="Josenhans C."/>
            <person name="Sterzenbach T."/>
            <person name="Drescher B."/>
            <person name="Brandt P."/>
            <person name="Bell M."/>
            <person name="Droege M."/>
            <person name="Fartmann B."/>
            <person name="Fischer H.-P."/>
            <person name="Ge Z."/>
            <person name="Hoerster A."/>
            <person name="Holland R."/>
            <person name="Klein K."/>
            <person name="Koenig J."/>
            <person name="Macko L."/>
            <person name="Mendz G.L."/>
            <person name="Nyakatura G."/>
            <person name="Schauer D.B."/>
            <person name="Shen Z."/>
            <person name="Weber J."/>
            <person name="Frosch M."/>
            <person name="Fox J.G."/>
        </authorList>
    </citation>
    <scope>NUCLEOTIDE SEQUENCE [LARGE SCALE GENOMIC DNA]</scope>
    <source>
        <strain>ATCC 51449 / 3B1</strain>
    </source>
</reference>
<sequence length="235" mass="26173">MTINLDKIKIPDDWKQLLASEFLSPYFADIKTHYLNALQNKEMIYPKPHQIFAAFNLTPLSSLKVVILGQDPYHGSGIIEGVETPQAMGLSFSVPRGMPIPPSLKNIYAELSQSLHITPPTHGDLSGWARQGVLLLNAILSVRANAPASHKHFGWEYFSDGVIRALSAHKEHLVFMLWGNYAKKKAPLIDASKHKIITAPHPSPLARGFVGSNVFLQANIYLQEHAKEPIAWEKL</sequence>
<evidence type="ECO:0000255" key="1">
    <source>
        <dbReference type="HAMAP-Rule" id="MF_00148"/>
    </source>
</evidence>
<organism>
    <name type="scientific">Helicobacter hepaticus (strain ATCC 51449 / 3B1)</name>
    <dbReference type="NCBI Taxonomy" id="235279"/>
    <lineage>
        <taxon>Bacteria</taxon>
        <taxon>Pseudomonadati</taxon>
        <taxon>Campylobacterota</taxon>
        <taxon>Epsilonproteobacteria</taxon>
        <taxon>Campylobacterales</taxon>
        <taxon>Helicobacteraceae</taxon>
        <taxon>Helicobacter</taxon>
    </lineage>
</organism>
<accession>Q7VGS1</accession>
<protein>
    <recommendedName>
        <fullName evidence="1">Uracil-DNA glycosylase</fullName>
        <shortName evidence="1">UDG</shortName>
        <ecNumber evidence="1">3.2.2.27</ecNumber>
    </recommendedName>
</protein>
<comment type="function">
    <text evidence="1">Excises uracil residues from the DNA which can arise as a result of misincorporation of dUMP residues by DNA polymerase or due to deamination of cytosine.</text>
</comment>
<comment type="catalytic activity">
    <reaction evidence="1">
        <text>Hydrolyzes single-stranded DNA or mismatched double-stranded DNA and polynucleotides, releasing free uracil.</text>
        <dbReference type="EC" id="3.2.2.27"/>
    </reaction>
</comment>
<comment type="subcellular location">
    <subcellularLocation>
        <location evidence="1">Cytoplasm</location>
    </subcellularLocation>
</comment>
<comment type="similarity">
    <text evidence="1">Belongs to the uracil-DNA glycosylase (UDG) superfamily. UNG family.</text>
</comment>
<dbReference type="EC" id="3.2.2.27" evidence="1"/>
<dbReference type="EMBL" id="AE017125">
    <property type="protein sequence ID" value="AAP77846.1"/>
    <property type="molecule type" value="Genomic_DNA"/>
</dbReference>
<dbReference type="RefSeq" id="WP_011116089.1">
    <property type="nucleotide sequence ID" value="NC_004917.1"/>
</dbReference>
<dbReference type="SMR" id="Q7VGS1"/>
<dbReference type="STRING" id="235279.HH_1249"/>
<dbReference type="KEGG" id="hhe:HH_1249"/>
<dbReference type="eggNOG" id="COG0692">
    <property type="taxonomic scope" value="Bacteria"/>
</dbReference>
<dbReference type="HOGENOM" id="CLU_032162_3_0_7"/>
<dbReference type="OrthoDB" id="9804372at2"/>
<dbReference type="Proteomes" id="UP000002495">
    <property type="component" value="Chromosome"/>
</dbReference>
<dbReference type="GO" id="GO:0005737">
    <property type="term" value="C:cytoplasm"/>
    <property type="evidence" value="ECO:0007669"/>
    <property type="project" value="UniProtKB-SubCell"/>
</dbReference>
<dbReference type="GO" id="GO:0004844">
    <property type="term" value="F:uracil DNA N-glycosylase activity"/>
    <property type="evidence" value="ECO:0007669"/>
    <property type="project" value="UniProtKB-UniRule"/>
</dbReference>
<dbReference type="GO" id="GO:0097510">
    <property type="term" value="P:base-excision repair, AP site formation via deaminated base removal"/>
    <property type="evidence" value="ECO:0007669"/>
    <property type="project" value="TreeGrafter"/>
</dbReference>
<dbReference type="CDD" id="cd10027">
    <property type="entry name" value="UDG-F1-like"/>
    <property type="match status" value="1"/>
</dbReference>
<dbReference type="Gene3D" id="3.40.470.10">
    <property type="entry name" value="Uracil-DNA glycosylase-like domain"/>
    <property type="match status" value="1"/>
</dbReference>
<dbReference type="HAMAP" id="MF_00148">
    <property type="entry name" value="UDG"/>
    <property type="match status" value="1"/>
</dbReference>
<dbReference type="InterPro" id="IPR002043">
    <property type="entry name" value="UDG_fam1"/>
</dbReference>
<dbReference type="InterPro" id="IPR018085">
    <property type="entry name" value="Ura-DNA_Glyclase_AS"/>
</dbReference>
<dbReference type="InterPro" id="IPR005122">
    <property type="entry name" value="Uracil-DNA_glycosylase-like"/>
</dbReference>
<dbReference type="InterPro" id="IPR036895">
    <property type="entry name" value="Uracil-DNA_glycosylase-like_sf"/>
</dbReference>
<dbReference type="NCBIfam" id="NF003588">
    <property type="entry name" value="PRK05254.1-1"/>
    <property type="match status" value="1"/>
</dbReference>
<dbReference type="NCBIfam" id="NF003589">
    <property type="entry name" value="PRK05254.1-2"/>
    <property type="match status" value="1"/>
</dbReference>
<dbReference type="NCBIfam" id="NF003592">
    <property type="entry name" value="PRK05254.1-5"/>
    <property type="match status" value="1"/>
</dbReference>
<dbReference type="NCBIfam" id="TIGR00628">
    <property type="entry name" value="ung"/>
    <property type="match status" value="1"/>
</dbReference>
<dbReference type="PANTHER" id="PTHR11264">
    <property type="entry name" value="URACIL-DNA GLYCOSYLASE"/>
    <property type="match status" value="1"/>
</dbReference>
<dbReference type="PANTHER" id="PTHR11264:SF0">
    <property type="entry name" value="URACIL-DNA GLYCOSYLASE"/>
    <property type="match status" value="1"/>
</dbReference>
<dbReference type="Pfam" id="PF03167">
    <property type="entry name" value="UDG"/>
    <property type="match status" value="1"/>
</dbReference>
<dbReference type="SMART" id="SM00986">
    <property type="entry name" value="UDG"/>
    <property type="match status" value="1"/>
</dbReference>
<dbReference type="SMART" id="SM00987">
    <property type="entry name" value="UreE_C"/>
    <property type="match status" value="1"/>
</dbReference>
<dbReference type="SUPFAM" id="SSF52141">
    <property type="entry name" value="Uracil-DNA glycosylase-like"/>
    <property type="match status" value="1"/>
</dbReference>
<dbReference type="PROSITE" id="PS00130">
    <property type="entry name" value="U_DNA_GLYCOSYLASE"/>
    <property type="match status" value="1"/>
</dbReference>
<feature type="chain" id="PRO_0000176101" description="Uracil-DNA glycosylase">
    <location>
        <begin position="1"/>
        <end position="235"/>
    </location>
</feature>
<feature type="active site" description="Proton acceptor" evidence="1">
    <location>
        <position position="71"/>
    </location>
</feature>
<keyword id="KW-0963">Cytoplasm</keyword>
<keyword id="KW-0227">DNA damage</keyword>
<keyword id="KW-0234">DNA repair</keyword>
<keyword id="KW-0378">Hydrolase</keyword>
<keyword id="KW-1185">Reference proteome</keyword>
<proteinExistence type="inferred from homology"/>
<name>UNG_HELHP</name>